<comment type="subcellular location">
    <subcellularLocation>
        <location evidence="4">Cell membrane</location>
        <topology evidence="4">Single-pass membrane protein</topology>
    </subcellularLocation>
</comment>
<comment type="induction">
    <text evidence="2 3">Induced by mitomycin C (MMC) and UV, and this requires RecA. Also induced by hydrogen prexoxide.</text>
</comment>
<comment type="similarity">
    <text evidence="4">Belongs to the UPF0714 family.</text>
</comment>
<gene>
    <name type="primary">ymaC</name>
    <name type="ordered locus">BSU17270</name>
</gene>
<accession>O31789</accession>
<keyword id="KW-1003">Cell membrane</keyword>
<keyword id="KW-0472">Membrane</keyword>
<keyword id="KW-1185">Reference proteome</keyword>
<keyword id="KW-0812">Transmembrane</keyword>
<keyword id="KW-1133">Transmembrane helix</keyword>
<protein>
    <recommendedName>
        <fullName>UPF0714 protein YmaC</fullName>
    </recommendedName>
</protein>
<evidence type="ECO:0000255" key="1"/>
<evidence type="ECO:0000269" key="2">
    <source>
    </source>
</evidence>
<evidence type="ECO:0000269" key="3">
    <source>
    </source>
</evidence>
<evidence type="ECO:0000305" key="4"/>
<reference key="1">
    <citation type="journal article" date="1997" name="Nature">
        <title>The complete genome sequence of the Gram-positive bacterium Bacillus subtilis.</title>
        <authorList>
            <person name="Kunst F."/>
            <person name="Ogasawara N."/>
            <person name="Moszer I."/>
            <person name="Albertini A.M."/>
            <person name="Alloni G."/>
            <person name="Azevedo V."/>
            <person name="Bertero M.G."/>
            <person name="Bessieres P."/>
            <person name="Bolotin A."/>
            <person name="Borchert S."/>
            <person name="Borriss R."/>
            <person name="Boursier L."/>
            <person name="Brans A."/>
            <person name="Braun M."/>
            <person name="Brignell S.C."/>
            <person name="Bron S."/>
            <person name="Brouillet S."/>
            <person name="Bruschi C.V."/>
            <person name="Caldwell B."/>
            <person name="Capuano V."/>
            <person name="Carter N.M."/>
            <person name="Choi S.-K."/>
            <person name="Codani J.-J."/>
            <person name="Connerton I.F."/>
            <person name="Cummings N.J."/>
            <person name="Daniel R.A."/>
            <person name="Denizot F."/>
            <person name="Devine K.M."/>
            <person name="Duesterhoeft A."/>
            <person name="Ehrlich S.D."/>
            <person name="Emmerson P.T."/>
            <person name="Entian K.-D."/>
            <person name="Errington J."/>
            <person name="Fabret C."/>
            <person name="Ferrari E."/>
            <person name="Foulger D."/>
            <person name="Fritz C."/>
            <person name="Fujita M."/>
            <person name="Fujita Y."/>
            <person name="Fuma S."/>
            <person name="Galizzi A."/>
            <person name="Galleron N."/>
            <person name="Ghim S.-Y."/>
            <person name="Glaser P."/>
            <person name="Goffeau A."/>
            <person name="Golightly E.J."/>
            <person name="Grandi G."/>
            <person name="Guiseppi G."/>
            <person name="Guy B.J."/>
            <person name="Haga K."/>
            <person name="Haiech J."/>
            <person name="Harwood C.R."/>
            <person name="Henaut A."/>
            <person name="Hilbert H."/>
            <person name="Holsappel S."/>
            <person name="Hosono S."/>
            <person name="Hullo M.-F."/>
            <person name="Itaya M."/>
            <person name="Jones L.-M."/>
            <person name="Joris B."/>
            <person name="Karamata D."/>
            <person name="Kasahara Y."/>
            <person name="Klaerr-Blanchard M."/>
            <person name="Klein C."/>
            <person name="Kobayashi Y."/>
            <person name="Koetter P."/>
            <person name="Koningstein G."/>
            <person name="Krogh S."/>
            <person name="Kumano M."/>
            <person name="Kurita K."/>
            <person name="Lapidus A."/>
            <person name="Lardinois S."/>
            <person name="Lauber J."/>
            <person name="Lazarevic V."/>
            <person name="Lee S.-M."/>
            <person name="Levine A."/>
            <person name="Liu H."/>
            <person name="Masuda S."/>
            <person name="Mauel C."/>
            <person name="Medigue C."/>
            <person name="Medina N."/>
            <person name="Mellado R.P."/>
            <person name="Mizuno M."/>
            <person name="Moestl D."/>
            <person name="Nakai S."/>
            <person name="Noback M."/>
            <person name="Noone D."/>
            <person name="O'Reilly M."/>
            <person name="Ogawa K."/>
            <person name="Ogiwara A."/>
            <person name="Oudega B."/>
            <person name="Park S.-H."/>
            <person name="Parro V."/>
            <person name="Pohl T.M."/>
            <person name="Portetelle D."/>
            <person name="Porwollik S."/>
            <person name="Prescott A.M."/>
            <person name="Presecan E."/>
            <person name="Pujic P."/>
            <person name="Purnelle B."/>
            <person name="Rapoport G."/>
            <person name="Rey M."/>
            <person name="Reynolds S."/>
            <person name="Rieger M."/>
            <person name="Rivolta C."/>
            <person name="Rocha E."/>
            <person name="Roche B."/>
            <person name="Rose M."/>
            <person name="Sadaie Y."/>
            <person name="Sato T."/>
            <person name="Scanlan E."/>
            <person name="Schleich S."/>
            <person name="Schroeter R."/>
            <person name="Scoffone F."/>
            <person name="Sekiguchi J."/>
            <person name="Sekowska A."/>
            <person name="Seror S.J."/>
            <person name="Serror P."/>
            <person name="Shin B.-S."/>
            <person name="Soldo B."/>
            <person name="Sorokin A."/>
            <person name="Tacconi E."/>
            <person name="Takagi T."/>
            <person name="Takahashi H."/>
            <person name="Takemaru K."/>
            <person name="Takeuchi M."/>
            <person name="Tamakoshi A."/>
            <person name="Tanaka T."/>
            <person name="Terpstra P."/>
            <person name="Tognoni A."/>
            <person name="Tosato V."/>
            <person name="Uchiyama S."/>
            <person name="Vandenbol M."/>
            <person name="Vannier F."/>
            <person name="Vassarotti A."/>
            <person name="Viari A."/>
            <person name="Wambutt R."/>
            <person name="Wedler E."/>
            <person name="Wedler H."/>
            <person name="Weitzenegger T."/>
            <person name="Winters P."/>
            <person name="Wipat A."/>
            <person name="Yamamoto H."/>
            <person name="Yamane K."/>
            <person name="Yasumoto K."/>
            <person name="Yata K."/>
            <person name="Yoshida K."/>
            <person name="Yoshikawa H.-F."/>
            <person name="Zumstein E."/>
            <person name="Yoshikawa H."/>
            <person name="Danchin A."/>
        </authorList>
    </citation>
    <scope>NUCLEOTIDE SEQUENCE [LARGE SCALE GENOMIC DNA]</scope>
    <source>
        <strain>168</strain>
    </source>
</reference>
<reference key="2">
    <citation type="journal article" date="2004" name="Microbiology">
        <title>Transcriptome and proteome analysis of Bacillus subtilis gene expression in response to superoxide and peroxide stress.</title>
        <authorList>
            <person name="Mostertz J."/>
            <person name="Scharf C."/>
            <person name="Hecker M."/>
            <person name="Homuth G."/>
        </authorList>
    </citation>
    <scope>INDUCTION BY HYDROGEN PEROXIDE</scope>
</reference>
<reference key="3">
    <citation type="journal article" date="2005" name="J. Bacteriol.">
        <title>Genetic composition of the Bacillus subtilis SOS system.</title>
        <authorList>
            <person name="Au N."/>
            <person name="Kuester-Schoeck E."/>
            <person name="Mandava V."/>
            <person name="Bothwell L.E."/>
            <person name="Canny S.P."/>
            <person name="Chachu K."/>
            <person name="Colavito S.A."/>
            <person name="Fuller S.N."/>
            <person name="Groban E.S."/>
            <person name="Hensley L.A."/>
            <person name="O'Brien T.C."/>
            <person name="Shah A."/>
            <person name="Tierney J.T."/>
            <person name="Tomm L.L."/>
            <person name="O'Gara T.M."/>
            <person name="Goranov A.I."/>
            <person name="Grossman A.D."/>
            <person name="Lovett C.M."/>
        </authorList>
    </citation>
    <scope>INDUCTION BY MITOMYCIN C AND UV</scope>
    <source>
        <strain>168 / YB886 / BG214</strain>
    </source>
</reference>
<proteinExistence type="evidence at transcript level"/>
<sequence>MRRFLLNVILVLAIVLFLRYVHYSLEPEPSNQPDTYSNFSSLAENESPADYDISYNEKKGSKVLIMSPHGGRIEGGVSELVRYFNNEYSTYLFEGLKSHDNQTLHITSTNFDEPLAKKKIKEHQYVVAFHGYKGENKNTLVGGTDRKRAKMIVRALERRGFSAELASSKSGLAGLNAENINNQGETGLSIQLEISREQREAFFDDFYYKNRKYTKNSEFYAYVSAIKGVLEKEYS</sequence>
<dbReference type="EMBL" id="AL009126">
    <property type="protein sequence ID" value="CAB13611.1"/>
    <property type="molecule type" value="Genomic_DNA"/>
</dbReference>
<dbReference type="PIR" id="E69883">
    <property type="entry name" value="E69883"/>
</dbReference>
<dbReference type="RefSeq" id="WP_003245758.1">
    <property type="nucleotide sequence ID" value="NZ_OZ025638.1"/>
</dbReference>
<dbReference type="SMR" id="O31789"/>
<dbReference type="FunCoup" id="O31789">
    <property type="interactions" value="50"/>
</dbReference>
<dbReference type="STRING" id="224308.BSU17270"/>
<dbReference type="PaxDb" id="224308-BSU17270"/>
<dbReference type="DNASU" id="940071"/>
<dbReference type="EnsemblBacteria" id="CAB13611">
    <property type="protein sequence ID" value="CAB13611"/>
    <property type="gene ID" value="BSU_17270"/>
</dbReference>
<dbReference type="GeneID" id="940071"/>
<dbReference type="KEGG" id="bsu:BSU17270"/>
<dbReference type="PATRIC" id="fig|224308.179.peg.1873"/>
<dbReference type="eggNOG" id="COG4195">
    <property type="taxonomic scope" value="Bacteria"/>
</dbReference>
<dbReference type="InParanoid" id="O31789"/>
<dbReference type="OrthoDB" id="7721587at2"/>
<dbReference type="PhylomeDB" id="O31789"/>
<dbReference type="BioCyc" id="BSUB:BSU17270-MONOMER"/>
<dbReference type="Proteomes" id="UP000001570">
    <property type="component" value="Chromosome"/>
</dbReference>
<dbReference type="GO" id="GO:0005886">
    <property type="term" value="C:plasma membrane"/>
    <property type="evidence" value="ECO:0007669"/>
    <property type="project" value="UniProtKB-SubCell"/>
</dbReference>
<dbReference type="Gene3D" id="3.40.630.100">
    <property type="entry name" value="Poly-gamma-glutamate hydrolase, zinc-binding motif"/>
    <property type="match status" value="1"/>
</dbReference>
<dbReference type="InterPro" id="IPR008585">
    <property type="entry name" value="Gamma_PGA_hydro"/>
</dbReference>
<dbReference type="InterPro" id="IPR038128">
    <property type="entry name" value="Gamma_PGA_hydro_sf"/>
</dbReference>
<dbReference type="Pfam" id="PF05908">
    <property type="entry name" value="Gamma_PGA_hydro"/>
    <property type="match status" value="1"/>
</dbReference>
<name>YMAC_BACSU</name>
<organism>
    <name type="scientific">Bacillus subtilis (strain 168)</name>
    <dbReference type="NCBI Taxonomy" id="224308"/>
    <lineage>
        <taxon>Bacteria</taxon>
        <taxon>Bacillati</taxon>
        <taxon>Bacillota</taxon>
        <taxon>Bacilli</taxon>
        <taxon>Bacillales</taxon>
        <taxon>Bacillaceae</taxon>
        <taxon>Bacillus</taxon>
    </lineage>
</organism>
<feature type="chain" id="PRO_0000360611" description="UPF0714 protein YmaC">
    <location>
        <begin position="1"/>
        <end position="235"/>
    </location>
</feature>
<feature type="transmembrane region" description="Helical" evidence="1">
    <location>
        <begin position="5"/>
        <end position="24"/>
    </location>
</feature>